<accession>B2SNZ4</accession>
<evidence type="ECO:0000255" key="1">
    <source>
        <dbReference type="HAMAP-Rule" id="MF_00046"/>
    </source>
</evidence>
<organism>
    <name type="scientific">Xanthomonas oryzae pv. oryzae (strain PXO99A)</name>
    <dbReference type="NCBI Taxonomy" id="360094"/>
    <lineage>
        <taxon>Bacteria</taxon>
        <taxon>Pseudomonadati</taxon>
        <taxon>Pseudomonadota</taxon>
        <taxon>Gammaproteobacteria</taxon>
        <taxon>Lysobacterales</taxon>
        <taxon>Lysobacteraceae</taxon>
        <taxon>Xanthomonas</taxon>
    </lineage>
</organism>
<proteinExistence type="inferred from homology"/>
<reference key="1">
    <citation type="journal article" date="2008" name="BMC Genomics">
        <title>Genome sequence and rapid evolution of the rice pathogen Xanthomonas oryzae pv. oryzae PXO99A.</title>
        <authorList>
            <person name="Salzberg S.L."/>
            <person name="Sommer D.D."/>
            <person name="Schatz M.C."/>
            <person name="Phillippy A.M."/>
            <person name="Rabinowicz P.D."/>
            <person name="Tsuge S."/>
            <person name="Furutani A."/>
            <person name="Ochiai H."/>
            <person name="Delcher A.L."/>
            <person name="Kelley D."/>
            <person name="Madupu R."/>
            <person name="Puiu D."/>
            <person name="Radune D."/>
            <person name="Shumway M."/>
            <person name="Trapnell C."/>
            <person name="Aparna G."/>
            <person name="Jha G."/>
            <person name="Pandey A."/>
            <person name="Patil P.B."/>
            <person name="Ishihara H."/>
            <person name="Meyer D.F."/>
            <person name="Szurek B."/>
            <person name="Verdier V."/>
            <person name="Koebnik R."/>
            <person name="Dow J.M."/>
            <person name="Ryan R.P."/>
            <person name="Hirata H."/>
            <person name="Tsuyumu S."/>
            <person name="Won Lee S."/>
            <person name="Seo Y.-S."/>
            <person name="Sriariyanum M."/>
            <person name="Ronald P.C."/>
            <person name="Sonti R.V."/>
            <person name="Van Sluys M.-A."/>
            <person name="Leach J.E."/>
            <person name="White F.F."/>
            <person name="Bogdanove A.J."/>
        </authorList>
    </citation>
    <scope>NUCLEOTIDE SEQUENCE [LARGE SCALE GENOMIC DNA]</scope>
    <source>
        <strain>PXO99A</strain>
    </source>
</reference>
<feature type="chain" id="PRO_1000091150" description="UDP-N-acetylmuramate--L-alanine ligase">
    <location>
        <begin position="1"/>
        <end position="477"/>
    </location>
</feature>
<feature type="binding site" evidence="1">
    <location>
        <begin position="122"/>
        <end position="128"/>
    </location>
    <ligand>
        <name>ATP</name>
        <dbReference type="ChEBI" id="CHEBI:30616"/>
    </ligand>
</feature>
<comment type="function">
    <text evidence="1">Cell wall formation.</text>
</comment>
<comment type="catalytic activity">
    <reaction evidence="1">
        <text>UDP-N-acetyl-alpha-D-muramate + L-alanine + ATP = UDP-N-acetyl-alpha-D-muramoyl-L-alanine + ADP + phosphate + H(+)</text>
        <dbReference type="Rhea" id="RHEA:23372"/>
        <dbReference type="ChEBI" id="CHEBI:15378"/>
        <dbReference type="ChEBI" id="CHEBI:30616"/>
        <dbReference type="ChEBI" id="CHEBI:43474"/>
        <dbReference type="ChEBI" id="CHEBI:57972"/>
        <dbReference type="ChEBI" id="CHEBI:70757"/>
        <dbReference type="ChEBI" id="CHEBI:83898"/>
        <dbReference type="ChEBI" id="CHEBI:456216"/>
        <dbReference type="EC" id="6.3.2.8"/>
    </reaction>
</comment>
<comment type="pathway">
    <text evidence="1">Cell wall biogenesis; peptidoglycan biosynthesis.</text>
</comment>
<comment type="subcellular location">
    <subcellularLocation>
        <location evidence="1">Cytoplasm</location>
    </subcellularLocation>
</comment>
<comment type="similarity">
    <text evidence="1">Belongs to the MurCDEF family.</text>
</comment>
<name>MURC_XANOP</name>
<gene>
    <name evidence="1" type="primary">murC</name>
    <name type="ordered locus">PXO_04366</name>
</gene>
<sequence length="477" mass="50706">MIRRLQDSGDLVRAFPRVHFVGIGGTGMSGIAEVMLTLGYEVSGSDNSDNVATRRLAKLGARVMRGHSAANVLGTDCVVVSSAIRDDNPELMEARSQRIPIMPRAAMLAELMRFRRGIAVAGTHGKTTTTSLAAAVLSEGGLDPTFVIGGQLLAAGANAKLGGGQWLVAEADESDGSFLRLNPLMAVITNIDADHLENYGNDFARIQAAFAEFLQRLPFYGLSLLCIDDPEVAALAGRTPRHVMSYGMSENADVRAEDVVQDGPRMRFTLRLPEGTTTPVTLALPGRHNVLNALAAAAIGWQLGVAPGTIARALENFAGIGRRFNDLGEVTTSTGARVRVVDDYGHHPRELEAVFAAARGGWPDKRLVVAFQPHRYSRTRDQFDAFAAVLSTVDALVLSEVYPAGEAPIPGADSRALARAIRARGRSEPVVVGQIASLAEVLPDVLQDGDLLLMMGAGDIGYVAQHIINNGFVGEPA</sequence>
<dbReference type="EC" id="6.3.2.8" evidence="1"/>
<dbReference type="EMBL" id="CP000967">
    <property type="protein sequence ID" value="ACD57695.1"/>
    <property type="molecule type" value="Genomic_DNA"/>
</dbReference>
<dbReference type="RefSeq" id="WP_011409375.1">
    <property type="nucleotide sequence ID" value="NC_010717.2"/>
</dbReference>
<dbReference type="SMR" id="B2SNZ4"/>
<dbReference type="KEGG" id="xop:PXO_04366"/>
<dbReference type="eggNOG" id="COG0773">
    <property type="taxonomic scope" value="Bacteria"/>
</dbReference>
<dbReference type="HOGENOM" id="CLU_028104_2_2_6"/>
<dbReference type="UniPathway" id="UPA00219"/>
<dbReference type="Proteomes" id="UP000001740">
    <property type="component" value="Chromosome"/>
</dbReference>
<dbReference type="GO" id="GO:0005737">
    <property type="term" value="C:cytoplasm"/>
    <property type="evidence" value="ECO:0007669"/>
    <property type="project" value="UniProtKB-SubCell"/>
</dbReference>
<dbReference type="GO" id="GO:0005524">
    <property type="term" value="F:ATP binding"/>
    <property type="evidence" value="ECO:0007669"/>
    <property type="project" value="UniProtKB-UniRule"/>
</dbReference>
<dbReference type="GO" id="GO:0008763">
    <property type="term" value="F:UDP-N-acetylmuramate-L-alanine ligase activity"/>
    <property type="evidence" value="ECO:0007669"/>
    <property type="project" value="UniProtKB-UniRule"/>
</dbReference>
<dbReference type="GO" id="GO:0051301">
    <property type="term" value="P:cell division"/>
    <property type="evidence" value="ECO:0007669"/>
    <property type="project" value="UniProtKB-KW"/>
</dbReference>
<dbReference type="GO" id="GO:0071555">
    <property type="term" value="P:cell wall organization"/>
    <property type="evidence" value="ECO:0007669"/>
    <property type="project" value="UniProtKB-KW"/>
</dbReference>
<dbReference type="GO" id="GO:0009252">
    <property type="term" value="P:peptidoglycan biosynthetic process"/>
    <property type="evidence" value="ECO:0007669"/>
    <property type="project" value="UniProtKB-UniRule"/>
</dbReference>
<dbReference type="GO" id="GO:0008360">
    <property type="term" value="P:regulation of cell shape"/>
    <property type="evidence" value="ECO:0007669"/>
    <property type="project" value="UniProtKB-KW"/>
</dbReference>
<dbReference type="Gene3D" id="3.90.190.20">
    <property type="entry name" value="Mur ligase, C-terminal domain"/>
    <property type="match status" value="1"/>
</dbReference>
<dbReference type="Gene3D" id="3.40.1190.10">
    <property type="entry name" value="Mur-like, catalytic domain"/>
    <property type="match status" value="1"/>
</dbReference>
<dbReference type="Gene3D" id="3.40.50.720">
    <property type="entry name" value="NAD(P)-binding Rossmann-like Domain"/>
    <property type="match status" value="1"/>
</dbReference>
<dbReference type="HAMAP" id="MF_00046">
    <property type="entry name" value="MurC"/>
    <property type="match status" value="1"/>
</dbReference>
<dbReference type="InterPro" id="IPR036565">
    <property type="entry name" value="Mur-like_cat_sf"/>
</dbReference>
<dbReference type="InterPro" id="IPR004101">
    <property type="entry name" value="Mur_ligase_C"/>
</dbReference>
<dbReference type="InterPro" id="IPR036615">
    <property type="entry name" value="Mur_ligase_C_dom_sf"/>
</dbReference>
<dbReference type="InterPro" id="IPR013221">
    <property type="entry name" value="Mur_ligase_cen"/>
</dbReference>
<dbReference type="InterPro" id="IPR000713">
    <property type="entry name" value="Mur_ligase_N"/>
</dbReference>
<dbReference type="InterPro" id="IPR050061">
    <property type="entry name" value="MurCDEF_pg_biosynth"/>
</dbReference>
<dbReference type="InterPro" id="IPR005758">
    <property type="entry name" value="UDP-N-AcMur_Ala_ligase_MurC"/>
</dbReference>
<dbReference type="NCBIfam" id="TIGR01082">
    <property type="entry name" value="murC"/>
    <property type="match status" value="1"/>
</dbReference>
<dbReference type="PANTHER" id="PTHR43445:SF3">
    <property type="entry name" value="UDP-N-ACETYLMURAMATE--L-ALANINE LIGASE"/>
    <property type="match status" value="1"/>
</dbReference>
<dbReference type="PANTHER" id="PTHR43445">
    <property type="entry name" value="UDP-N-ACETYLMURAMATE--L-ALANINE LIGASE-RELATED"/>
    <property type="match status" value="1"/>
</dbReference>
<dbReference type="Pfam" id="PF01225">
    <property type="entry name" value="Mur_ligase"/>
    <property type="match status" value="1"/>
</dbReference>
<dbReference type="Pfam" id="PF02875">
    <property type="entry name" value="Mur_ligase_C"/>
    <property type="match status" value="1"/>
</dbReference>
<dbReference type="Pfam" id="PF08245">
    <property type="entry name" value="Mur_ligase_M"/>
    <property type="match status" value="1"/>
</dbReference>
<dbReference type="SUPFAM" id="SSF51984">
    <property type="entry name" value="MurCD N-terminal domain"/>
    <property type="match status" value="1"/>
</dbReference>
<dbReference type="SUPFAM" id="SSF53623">
    <property type="entry name" value="MurD-like peptide ligases, catalytic domain"/>
    <property type="match status" value="1"/>
</dbReference>
<dbReference type="SUPFAM" id="SSF53244">
    <property type="entry name" value="MurD-like peptide ligases, peptide-binding domain"/>
    <property type="match status" value="1"/>
</dbReference>
<keyword id="KW-0067">ATP-binding</keyword>
<keyword id="KW-0131">Cell cycle</keyword>
<keyword id="KW-0132">Cell division</keyword>
<keyword id="KW-0133">Cell shape</keyword>
<keyword id="KW-0961">Cell wall biogenesis/degradation</keyword>
<keyword id="KW-0963">Cytoplasm</keyword>
<keyword id="KW-0436">Ligase</keyword>
<keyword id="KW-0547">Nucleotide-binding</keyword>
<keyword id="KW-0573">Peptidoglycan synthesis</keyword>
<protein>
    <recommendedName>
        <fullName evidence="1">UDP-N-acetylmuramate--L-alanine ligase</fullName>
        <ecNumber evidence="1">6.3.2.8</ecNumber>
    </recommendedName>
    <alternativeName>
        <fullName evidence="1">UDP-N-acetylmuramoyl-L-alanine synthetase</fullName>
    </alternativeName>
</protein>